<evidence type="ECO:0000255" key="1">
    <source>
        <dbReference type="PROSITE-ProRule" id="PRU01348"/>
    </source>
</evidence>
<evidence type="ECO:0000269" key="2">
    <source>
    </source>
</evidence>
<evidence type="ECO:0000269" key="3">
    <source>
    </source>
</evidence>
<evidence type="ECO:0000269" key="4">
    <source>
    </source>
</evidence>
<evidence type="ECO:0000305" key="5"/>
<keyword id="KW-0012">Acyltransferase</keyword>
<keyword id="KW-0045">Antibiotic biosynthesis</keyword>
<keyword id="KW-0963">Cytoplasm</keyword>
<keyword id="KW-0456">Lyase</keyword>
<keyword id="KW-1185">Reference proteome</keyword>
<keyword id="KW-0808">Transferase</keyword>
<comment type="function">
    <text evidence="2 4">Involved in some intermediate steps for the synthesis of the antibiotic polyketide bacillaene which is involved in secondary metabolism. It decarboxylates selectively the malonyl group attached on the acyl-carrier-protein AcpK (Mal-AcpK).</text>
</comment>
<comment type="catalytic activity">
    <reaction evidence="2">
        <text>malonyl-[ACP] + H(+) = acetyl-[ACP] + CO2</text>
        <dbReference type="Rhea" id="RHEA:24460"/>
        <dbReference type="Rhea" id="RHEA-COMP:9621"/>
        <dbReference type="Rhea" id="RHEA-COMP:9623"/>
        <dbReference type="ChEBI" id="CHEBI:15378"/>
        <dbReference type="ChEBI" id="CHEBI:16526"/>
        <dbReference type="ChEBI" id="CHEBI:78446"/>
        <dbReference type="ChEBI" id="CHEBI:78449"/>
        <dbReference type="EC" id="4.1.1.87"/>
    </reaction>
</comment>
<comment type="pathway">
    <text>Antibiotic biosynthesis; bacillaene biosynthesis.</text>
</comment>
<comment type="subcellular location">
    <subcellularLocation>
        <location evidence="3">Cytoplasm</location>
    </subcellularLocation>
</comment>
<comment type="similarity">
    <text evidence="5">Belongs to the thiolase-like superfamily. Beta-ketoacyl-ACP synthases family.</text>
</comment>
<protein>
    <recommendedName>
        <fullName>Polyketide biosynthesis malonyl-ACP decarboxylase PksF</fullName>
        <ecNumber>4.1.1.87</ecNumber>
    </recommendedName>
    <alternativeName>
        <fullName>Malonyl acyl-carrier-protein decarboxylase</fullName>
    </alternativeName>
</protein>
<sequence length="415" mass="45009">MTKCNLPEVVVTGVGVTASIGQGKEDFASSLLSGRHAFDVMKRSGRQKDSRFIGAEIASLSYPDRLSKKMLRKASFSSRAALVTLTEAWEEAELDDADSSRIGLVVGGSNFQQRENFEVYERYQDRSGFISPAYGLSFMDSDLCGICTDQFGITGLAYTVGGASASGQLAVIHAIQQVLSGEVDTCIALGALMDLSYMECEALRALGAMGTDKYADEPENACRPFDQNRDGFIYGESCGALVIERKETALRRGLKPYAALSGWSIKLDGNRNPDPSLEGEIHVIQKALERARLLPEDIDYINPHGTGSFIGDEIELKALRACRLSHAYINATKSITGHGLSAAGIVEIISVLLQMKKSALHPSRNLDHPIDDSFHWVNEKSISYRIKNALSLSMGFGGMNTAVCIQNIEKCGGES</sequence>
<accession>P40804</accession>
<feature type="chain" id="PRO_0000180350" description="Polyketide biosynthesis malonyl-ACP decarboxylase PksF">
    <location>
        <begin position="1"/>
        <end position="415"/>
    </location>
</feature>
<feature type="domain" description="Ketosynthase family 3 (KS3)" evidence="1">
    <location>
        <begin position="6"/>
        <end position="407"/>
    </location>
</feature>
<feature type="sequence conflict" description="In Ref. 1; AAA85139." evidence="5" ref="1">
    <original>Q</original>
    <variation>QQ</variation>
    <location>
        <position position="168"/>
    </location>
</feature>
<name>PKSF_BACSU</name>
<reference key="1">
    <citation type="journal article" date="1995" name="Microbiology">
        <title>Sequence around the 159 degree region of the Bacillus subtilis genome: the pksX locus spans 33.6 kb.</title>
        <authorList>
            <person name="Albertini A.M."/>
            <person name="Caramori T."/>
            <person name="Scoffone F."/>
            <person name="Scotti C."/>
            <person name="Galizzi A."/>
        </authorList>
    </citation>
    <scope>NUCLEOTIDE SEQUENCE [GENOMIC DNA]</scope>
    <source>
        <strain>168 / PB1424</strain>
    </source>
</reference>
<reference key="2">
    <citation type="journal article" date="1997" name="Nature">
        <title>The complete genome sequence of the Gram-positive bacterium Bacillus subtilis.</title>
        <authorList>
            <person name="Kunst F."/>
            <person name="Ogasawara N."/>
            <person name="Moszer I."/>
            <person name="Albertini A.M."/>
            <person name="Alloni G."/>
            <person name="Azevedo V."/>
            <person name="Bertero M.G."/>
            <person name="Bessieres P."/>
            <person name="Bolotin A."/>
            <person name="Borchert S."/>
            <person name="Borriss R."/>
            <person name="Boursier L."/>
            <person name="Brans A."/>
            <person name="Braun M."/>
            <person name="Brignell S.C."/>
            <person name="Bron S."/>
            <person name="Brouillet S."/>
            <person name="Bruschi C.V."/>
            <person name="Caldwell B."/>
            <person name="Capuano V."/>
            <person name="Carter N.M."/>
            <person name="Choi S.-K."/>
            <person name="Codani J.-J."/>
            <person name="Connerton I.F."/>
            <person name="Cummings N.J."/>
            <person name="Daniel R.A."/>
            <person name="Denizot F."/>
            <person name="Devine K.M."/>
            <person name="Duesterhoeft A."/>
            <person name="Ehrlich S.D."/>
            <person name="Emmerson P.T."/>
            <person name="Entian K.-D."/>
            <person name="Errington J."/>
            <person name="Fabret C."/>
            <person name="Ferrari E."/>
            <person name="Foulger D."/>
            <person name="Fritz C."/>
            <person name="Fujita M."/>
            <person name="Fujita Y."/>
            <person name="Fuma S."/>
            <person name="Galizzi A."/>
            <person name="Galleron N."/>
            <person name="Ghim S.-Y."/>
            <person name="Glaser P."/>
            <person name="Goffeau A."/>
            <person name="Golightly E.J."/>
            <person name="Grandi G."/>
            <person name="Guiseppi G."/>
            <person name="Guy B.J."/>
            <person name="Haga K."/>
            <person name="Haiech J."/>
            <person name="Harwood C.R."/>
            <person name="Henaut A."/>
            <person name="Hilbert H."/>
            <person name="Holsappel S."/>
            <person name="Hosono S."/>
            <person name="Hullo M.-F."/>
            <person name="Itaya M."/>
            <person name="Jones L.-M."/>
            <person name="Joris B."/>
            <person name="Karamata D."/>
            <person name="Kasahara Y."/>
            <person name="Klaerr-Blanchard M."/>
            <person name="Klein C."/>
            <person name="Kobayashi Y."/>
            <person name="Koetter P."/>
            <person name="Koningstein G."/>
            <person name="Krogh S."/>
            <person name="Kumano M."/>
            <person name="Kurita K."/>
            <person name="Lapidus A."/>
            <person name="Lardinois S."/>
            <person name="Lauber J."/>
            <person name="Lazarevic V."/>
            <person name="Lee S.-M."/>
            <person name="Levine A."/>
            <person name="Liu H."/>
            <person name="Masuda S."/>
            <person name="Mauel C."/>
            <person name="Medigue C."/>
            <person name="Medina N."/>
            <person name="Mellado R.P."/>
            <person name="Mizuno M."/>
            <person name="Moestl D."/>
            <person name="Nakai S."/>
            <person name="Noback M."/>
            <person name="Noone D."/>
            <person name="O'Reilly M."/>
            <person name="Ogawa K."/>
            <person name="Ogiwara A."/>
            <person name="Oudega B."/>
            <person name="Park S.-H."/>
            <person name="Parro V."/>
            <person name="Pohl T.M."/>
            <person name="Portetelle D."/>
            <person name="Porwollik S."/>
            <person name="Prescott A.M."/>
            <person name="Presecan E."/>
            <person name="Pujic P."/>
            <person name="Purnelle B."/>
            <person name="Rapoport G."/>
            <person name="Rey M."/>
            <person name="Reynolds S."/>
            <person name="Rieger M."/>
            <person name="Rivolta C."/>
            <person name="Rocha E."/>
            <person name="Roche B."/>
            <person name="Rose M."/>
            <person name="Sadaie Y."/>
            <person name="Sato T."/>
            <person name="Scanlan E."/>
            <person name="Schleich S."/>
            <person name="Schroeter R."/>
            <person name="Scoffone F."/>
            <person name="Sekiguchi J."/>
            <person name="Sekowska A."/>
            <person name="Seror S.J."/>
            <person name="Serror P."/>
            <person name="Shin B.-S."/>
            <person name="Soldo B."/>
            <person name="Sorokin A."/>
            <person name="Tacconi E."/>
            <person name="Takagi T."/>
            <person name="Takahashi H."/>
            <person name="Takemaru K."/>
            <person name="Takeuchi M."/>
            <person name="Tamakoshi A."/>
            <person name="Tanaka T."/>
            <person name="Terpstra P."/>
            <person name="Tognoni A."/>
            <person name="Tosato V."/>
            <person name="Uchiyama S."/>
            <person name="Vandenbol M."/>
            <person name="Vannier F."/>
            <person name="Vassarotti A."/>
            <person name="Viari A."/>
            <person name="Wambutt R."/>
            <person name="Wedler E."/>
            <person name="Wedler H."/>
            <person name="Weitzenegger T."/>
            <person name="Winters P."/>
            <person name="Wipat A."/>
            <person name="Yamamoto H."/>
            <person name="Yamane K."/>
            <person name="Yasumoto K."/>
            <person name="Yata K."/>
            <person name="Yoshida K."/>
            <person name="Yoshikawa H.-F."/>
            <person name="Zumstein E."/>
            <person name="Yoshikawa H."/>
            <person name="Danchin A."/>
        </authorList>
    </citation>
    <scope>NUCLEOTIDE SEQUENCE [LARGE SCALE GENOMIC DNA]</scope>
    <source>
        <strain>168</strain>
    </source>
</reference>
<reference key="3">
    <citation type="journal article" date="2009" name="Microbiology">
        <title>From a consortium sequence to a unified sequence: the Bacillus subtilis 168 reference genome a decade later.</title>
        <authorList>
            <person name="Barbe V."/>
            <person name="Cruveiller S."/>
            <person name="Kunst F."/>
            <person name="Lenoble P."/>
            <person name="Meurice G."/>
            <person name="Sekowska A."/>
            <person name="Vallenet D."/>
            <person name="Wang T."/>
            <person name="Moszer I."/>
            <person name="Medigue C."/>
            <person name="Danchin A."/>
        </authorList>
    </citation>
    <scope>SEQUENCE REVISION TO 168</scope>
</reference>
<reference key="4">
    <citation type="journal article" date="2006" name="Proc. Natl. Acad. Sci. U.S.A.">
        <title>Convergence of isoprene and polyketide biosynthetic machinery: isoprenyl-S-carrier proteins in the pksX pathway of Bacillus subtilis.</title>
        <authorList>
            <person name="Calderone C.T."/>
            <person name="Kowtoniuk W.E."/>
            <person name="Kelleher N.L."/>
            <person name="Walsh C.T."/>
            <person name="Dorrestein P.C."/>
        </authorList>
    </citation>
    <scope>FUNCTION</scope>
    <scope>CATALYTIC ACTIVITY</scope>
</reference>
<reference key="5">
    <citation type="journal article" date="2007" name="Proc. Natl. Acad. Sci. U.S.A.">
        <title>A singular enzymatic megacomplex from Bacillus subtilis.</title>
        <authorList>
            <person name="Straight P.D."/>
            <person name="Fischbach M.A."/>
            <person name="Walsh C.T."/>
            <person name="Rudner D.Z."/>
            <person name="Kolter R."/>
        </authorList>
    </citation>
    <scope>SUBCELLULAR LOCATION</scope>
    <source>
        <strain>168 / Marburg / ATCC 6051 / DSM 10 / JCM 1465 / NBRC 13719 / NCIMB 3610 / NRRL NRS-744 / VKM B-501</strain>
    </source>
</reference>
<reference key="6">
    <citation type="journal article" date="2007" name="Proc. Natl. Acad. Sci. U.S.A.">
        <title>The identification of bacillaene, the product of the PksX megacomplex in Bacillus subtilis.</title>
        <authorList>
            <person name="Butcher R.A."/>
            <person name="Schroeder F.C."/>
            <person name="Fischbach M.A."/>
            <person name="Straight P.D."/>
            <person name="Kolter R."/>
            <person name="Walsh C.T."/>
            <person name="Clardy J."/>
        </authorList>
    </citation>
    <scope>FUNCTION IN BACILLAENE BIOSYNTHESIS</scope>
    <source>
        <strain>168 / Marburg / ATCC 6051 / DSM 10 / JCM 1465 / NBRC 13719 / NCIMB 3610 / NRRL NRS-744 / VKM B-501</strain>
    </source>
</reference>
<proteinExistence type="evidence at protein level"/>
<gene>
    <name type="primary">pksF</name>
    <name type="ordered locus">BSU17140</name>
</gene>
<organism>
    <name type="scientific">Bacillus subtilis (strain 168)</name>
    <dbReference type="NCBI Taxonomy" id="224308"/>
    <lineage>
        <taxon>Bacteria</taxon>
        <taxon>Bacillati</taxon>
        <taxon>Bacillota</taxon>
        <taxon>Bacilli</taxon>
        <taxon>Bacillales</taxon>
        <taxon>Bacillaceae</taxon>
        <taxon>Bacillus</taxon>
    </lineage>
</organism>
<dbReference type="EC" id="4.1.1.87"/>
<dbReference type="EMBL" id="U11039">
    <property type="protein sequence ID" value="AAA85139.1"/>
    <property type="molecule type" value="Genomic_DNA"/>
</dbReference>
<dbReference type="EMBL" id="AL009126">
    <property type="protein sequence ID" value="CAB13585.2"/>
    <property type="molecule type" value="Genomic_DNA"/>
</dbReference>
<dbReference type="PIR" id="D69678">
    <property type="entry name" value="D69678"/>
</dbReference>
<dbReference type="RefSeq" id="NP_389594.2">
    <property type="nucleotide sequence ID" value="NC_000964.3"/>
</dbReference>
<dbReference type="RefSeq" id="WP_003245287.1">
    <property type="nucleotide sequence ID" value="NZ_OZ025638.1"/>
</dbReference>
<dbReference type="SMR" id="P40804"/>
<dbReference type="FunCoup" id="P40804">
    <property type="interactions" value="19"/>
</dbReference>
<dbReference type="STRING" id="224308.BSU17140"/>
<dbReference type="PaxDb" id="224308-BSU17140"/>
<dbReference type="EnsemblBacteria" id="CAB13585">
    <property type="protein sequence ID" value="CAB13585"/>
    <property type="gene ID" value="BSU_17140"/>
</dbReference>
<dbReference type="GeneID" id="939500"/>
<dbReference type="KEGG" id="bsu:BSU17140"/>
<dbReference type="PATRIC" id="fig|224308.179.peg.1859"/>
<dbReference type="eggNOG" id="COG0304">
    <property type="taxonomic scope" value="Bacteria"/>
</dbReference>
<dbReference type="InParanoid" id="P40804"/>
<dbReference type="OrthoDB" id="9808669at2"/>
<dbReference type="PhylomeDB" id="P40804"/>
<dbReference type="BioCyc" id="BSUB:BSU17140-MONOMER"/>
<dbReference type="UniPathway" id="UPA01003"/>
<dbReference type="Proteomes" id="UP000001570">
    <property type="component" value="Chromosome"/>
</dbReference>
<dbReference type="GO" id="GO:0005829">
    <property type="term" value="C:cytosol"/>
    <property type="evidence" value="ECO:0000318"/>
    <property type="project" value="GO_Central"/>
</dbReference>
<dbReference type="GO" id="GO:0004315">
    <property type="term" value="F:3-oxoacyl-[acyl-carrier-protein] synthase activity"/>
    <property type="evidence" value="ECO:0000318"/>
    <property type="project" value="GO_Central"/>
</dbReference>
<dbReference type="GO" id="GO:0016829">
    <property type="term" value="F:lyase activity"/>
    <property type="evidence" value="ECO:0007669"/>
    <property type="project" value="UniProtKB-KW"/>
</dbReference>
<dbReference type="GO" id="GO:0017000">
    <property type="term" value="P:antibiotic biosynthetic process"/>
    <property type="evidence" value="ECO:0007669"/>
    <property type="project" value="UniProtKB-KW"/>
</dbReference>
<dbReference type="GO" id="GO:0006633">
    <property type="term" value="P:fatty acid biosynthetic process"/>
    <property type="evidence" value="ECO:0000318"/>
    <property type="project" value="GO_Central"/>
</dbReference>
<dbReference type="CDD" id="cd00834">
    <property type="entry name" value="KAS_I_II"/>
    <property type="match status" value="1"/>
</dbReference>
<dbReference type="Gene3D" id="3.40.47.10">
    <property type="match status" value="1"/>
</dbReference>
<dbReference type="InterPro" id="IPR000794">
    <property type="entry name" value="Beta-ketoacyl_synthase"/>
</dbReference>
<dbReference type="InterPro" id="IPR014031">
    <property type="entry name" value="Ketoacyl_synth_C"/>
</dbReference>
<dbReference type="InterPro" id="IPR014030">
    <property type="entry name" value="Ketoacyl_synth_N"/>
</dbReference>
<dbReference type="InterPro" id="IPR020841">
    <property type="entry name" value="PKS_Beta-ketoAc_synthase_dom"/>
</dbReference>
<dbReference type="InterPro" id="IPR016039">
    <property type="entry name" value="Thiolase-like"/>
</dbReference>
<dbReference type="NCBIfam" id="NF005490">
    <property type="entry name" value="PRK07103.1"/>
    <property type="match status" value="1"/>
</dbReference>
<dbReference type="PANTHER" id="PTHR11712:SF336">
    <property type="entry name" value="3-OXOACYL-[ACYL-CARRIER-PROTEIN] SYNTHASE, MITOCHONDRIAL"/>
    <property type="match status" value="1"/>
</dbReference>
<dbReference type="PANTHER" id="PTHR11712">
    <property type="entry name" value="POLYKETIDE SYNTHASE-RELATED"/>
    <property type="match status" value="1"/>
</dbReference>
<dbReference type="Pfam" id="PF00109">
    <property type="entry name" value="ketoacyl-synt"/>
    <property type="match status" value="1"/>
</dbReference>
<dbReference type="Pfam" id="PF02801">
    <property type="entry name" value="Ketoacyl-synt_C"/>
    <property type="match status" value="1"/>
</dbReference>
<dbReference type="SMART" id="SM00825">
    <property type="entry name" value="PKS_KS"/>
    <property type="match status" value="1"/>
</dbReference>
<dbReference type="SUPFAM" id="SSF53901">
    <property type="entry name" value="Thiolase-like"/>
    <property type="match status" value="2"/>
</dbReference>
<dbReference type="PROSITE" id="PS52004">
    <property type="entry name" value="KS3_2"/>
    <property type="match status" value="1"/>
</dbReference>